<feature type="signal peptide" evidence="1">
    <location>
        <begin position="1"/>
        <end position="22"/>
    </location>
</feature>
<feature type="propeptide" id="PRO_0000450231" evidence="10 11">
    <location>
        <begin position="23"/>
        <end position="46"/>
    </location>
</feature>
<feature type="peptide" id="PRO_0000043800" description="Frenatin-3" evidence="5 6">
    <location>
        <begin position="47"/>
        <end position="68"/>
    </location>
</feature>
<feature type="region of interest" description="Disordered" evidence="2">
    <location>
        <begin position="26"/>
        <end position="47"/>
    </location>
</feature>
<feature type="compositionally biased region" description="Acidic residues" evidence="2">
    <location>
        <begin position="30"/>
        <end position="42"/>
    </location>
</feature>
<accession>P56249</accession>
<accession>Q571V5</accession>
<keyword id="KW-0878">Amphibian defense peptide</keyword>
<keyword id="KW-0044">Antibiotic</keyword>
<keyword id="KW-0929">Antimicrobial</keyword>
<keyword id="KW-0903">Direct protein sequencing</keyword>
<keyword id="KW-0391">Immunity</keyword>
<keyword id="KW-0399">Innate immunity</keyword>
<keyword id="KW-0964">Secreted</keyword>
<keyword id="KW-0732">Signal</keyword>
<sequence>MHFLKKSIFLVLFLGLVSLSICEKEKREDQNEEEVDENEEESEEKRGLMSVLGHAVGNVLGGLFKPKS</sequence>
<protein>
    <recommendedName>
        <fullName evidence="7 8">Frenatin-3</fullName>
    </recommendedName>
</protein>
<comment type="function">
    <text evidence="3 6">Antimicrobial peptide with activity against both Gram-positive and Gram-negative bacteria (PubMed:9225251). Antibacterial activities have been tested against Bacillus cereus (MIC=12.5 ug/ml), Escherichia coli (MIC=50 ug/ml), Leuconostoc mesenteroides (MIC=25 ug/ml), Micrococcus luteus (MIC=1.5 ug/ml), Pastewella haemolytica (MIC=0.8 ug/ml), Staphylococcus aureus (MIC&lt;l00 ug/ml), Streptococcus faecalis (MIC&lt;150 ug/ml) and Streptococcus uberis (MIC=50 ug/ml) (PubMed:9225251). Strongly inhibits the formation of NO by neuronal nitric oxide synthase (nNOS) at micromolar concentrations (PubMed:11784303). Acts by a non-competitive mechanism, probably by binding to calcium/calmodulin and as a consequence blocking calmodulin attachment to nNOS (PubMed:11784303).</text>
</comment>
<comment type="subcellular location">
    <subcellularLocation>
        <location evidence="5 6">Secreted</location>
    </subcellularLocation>
</comment>
<comment type="tissue specificity">
    <text evidence="11">Expressed by the granular skin glands.</text>
</comment>
<comment type="mass spectrometry"/>
<comment type="miscellaneous">
    <text evidence="4">Forms an amphipathic alpha-helix over residues 47-60 while the C-terminal eight residues are more flexible and less structured. The flexible region may be responsible for the lack of antimicrobial activity.</text>
</comment>
<comment type="similarity">
    <text evidence="9">Belongs to the frog skin active peptide (FSAP) family. Frenatin subfamily.</text>
</comment>
<reference key="1">
    <citation type="journal article" date="2005" name="Peptides">
        <title>Novel frenatins from the skin of the Australasian giant white-lipped tree frog, Litoria infrafrenata: cloning of precursor cDNAs and identification in defensive skin secretion.</title>
        <authorList>
            <person name="Zhou M."/>
            <person name="Chen T."/>
            <person name="Walker B."/>
            <person name="Shaw C."/>
        </authorList>
    </citation>
    <scope>NUCLEOTIDE SEQUENCE [MRNA]</scope>
    <scope>PROTEIN SEQUENCE OF 47-68</scope>
    <scope>MASS SPECTROMETRY</scope>
    <scope>SUBCELLULAR LOCATION</scope>
    <source>
        <tissue>Skin</tissue>
    </source>
</reference>
<reference key="2">
    <citation type="journal article" date="1996" name="J. Pept. Sci.">
        <title>The structures of the frenatin peptides from the skin secretion of the giant tree frog Litoria infrafrenata.</title>
        <authorList>
            <person name="Raftery M.J."/>
            <person name="Waugh R.J."/>
            <person name="Bowie J.H."/>
            <person name="Wallace J.C."/>
            <person name="Tyler M.J."/>
        </authorList>
    </citation>
    <scope>PROTEIN SEQUENCE OF 47-68</scope>
    <scope>FUNCTION</scope>
    <scope>SUBCELLULAR LOCATION</scope>
    <source>
        <tissue>Skin secretion</tissue>
    </source>
</reference>
<reference key="3">
    <citation type="journal article" date="2002" name="Eur. J. Biochem.">
        <title>Amphibian peptides that inhibit neuronal nitric oxide synthase. Isolation of lesuerin from the skin secretion of the Australian stony creek frog Litoria lesueuri.</title>
        <authorList>
            <person name="Doyle J."/>
            <person name="Llewellyn L.E."/>
            <person name="Brinkworth C.S."/>
            <person name="Bowie J.H."/>
            <person name="Wegener K.L."/>
            <person name="Rozek T."/>
            <person name="Wabnitz P.A."/>
            <person name="Wallace J.C."/>
            <person name="Tyler M.J."/>
        </authorList>
    </citation>
    <scope>FUNCTION</scope>
</reference>
<reference key="4">
    <citation type="journal article" date="2003" name="Biopolymers">
        <title>The solution structure of frenatin 3, a neuronal nitric oxide synthase inhibitor from the giant tree frog, Litoria infrafrenata.</title>
        <authorList>
            <person name="Brinkworth C.S."/>
            <person name="Carver J.A."/>
            <person name="Wegener K.L."/>
            <person name="Doyle J."/>
            <person name="Llewellyn L.E."/>
            <person name="Bowie J.H."/>
        </authorList>
    </citation>
    <scope>STRUCTURE BY NMR OF 47-68</scope>
</reference>
<name>FRE3_NYCIN</name>
<proteinExistence type="evidence at protein level"/>
<organism>
    <name type="scientific">Nyctimystes infrafrenatus</name>
    <name type="common">White-lipped tree frog</name>
    <name type="synonym">Litoria infrafrenata</name>
    <dbReference type="NCBI Taxonomy" id="61195"/>
    <lineage>
        <taxon>Eukaryota</taxon>
        <taxon>Metazoa</taxon>
        <taxon>Chordata</taxon>
        <taxon>Craniata</taxon>
        <taxon>Vertebrata</taxon>
        <taxon>Euteleostomi</taxon>
        <taxon>Amphibia</taxon>
        <taxon>Batrachia</taxon>
        <taxon>Anura</taxon>
        <taxon>Neobatrachia</taxon>
        <taxon>Hyloidea</taxon>
        <taxon>Hylidae</taxon>
        <taxon>Pelodryadinae</taxon>
        <taxon>Nyctimystes</taxon>
    </lineage>
</organism>
<evidence type="ECO:0000255" key="1"/>
<evidence type="ECO:0000256" key="2">
    <source>
        <dbReference type="SAM" id="MobiDB-lite"/>
    </source>
</evidence>
<evidence type="ECO:0000269" key="3">
    <source>
    </source>
</evidence>
<evidence type="ECO:0000269" key="4">
    <source>
    </source>
</evidence>
<evidence type="ECO:0000269" key="5">
    <source>
    </source>
</evidence>
<evidence type="ECO:0000269" key="6">
    <source>
    </source>
</evidence>
<evidence type="ECO:0000303" key="7">
    <source>
    </source>
</evidence>
<evidence type="ECO:0000303" key="8">
    <source>
    </source>
</evidence>
<evidence type="ECO:0000305" key="9"/>
<evidence type="ECO:0000305" key="10">
    <source>
    </source>
</evidence>
<evidence type="ECO:0000305" key="11">
    <source>
    </source>
</evidence>
<dbReference type="EMBL" id="AJ937524">
    <property type="protein sequence ID" value="CAI77673.1"/>
    <property type="molecule type" value="mRNA"/>
</dbReference>
<dbReference type="TCDB" id="1.C.52.1.33">
    <property type="family name" value="the dermaseptin (dermaseptin) family"/>
</dbReference>
<dbReference type="GO" id="GO:0005576">
    <property type="term" value="C:extracellular region"/>
    <property type="evidence" value="ECO:0007669"/>
    <property type="project" value="UniProtKB-SubCell"/>
</dbReference>
<dbReference type="GO" id="GO:0042742">
    <property type="term" value="P:defense response to bacterium"/>
    <property type="evidence" value="ECO:0007669"/>
    <property type="project" value="UniProtKB-KW"/>
</dbReference>
<dbReference type="GO" id="GO:0045087">
    <property type="term" value="P:innate immune response"/>
    <property type="evidence" value="ECO:0007669"/>
    <property type="project" value="UniProtKB-KW"/>
</dbReference>
<dbReference type="InterPro" id="IPR004275">
    <property type="entry name" value="Frog_antimicrobial_propeptide"/>
</dbReference>
<dbReference type="InterPro" id="IPR016322">
    <property type="entry name" value="FSAP"/>
</dbReference>
<dbReference type="Pfam" id="PF03032">
    <property type="entry name" value="FSAP_sig_propep"/>
    <property type="match status" value="1"/>
</dbReference>
<dbReference type="PIRSF" id="PIRSF001822">
    <property type="entry name" value="Dermaseptin_precursor"/>
    <property type="match status" value="1"/>
</dbReference>